<proteinExistence type="inferred from homology"/>
<protein>
    <recommendedName>
        <fullName evidence="1">Cell division protein SepF</fullName>
    </recommendedName>
</protein>
<dbReference type="EMBL" id="CP000764">
    <property type="protein sequence ID" value="ABS22782.1"/>
    <property type="molecule type" value="Genomic_DNA"/>
</dbReference>
<dbReference type="RefSeq" id="WP_012094989.1">
    <property type="nucleotide sequence ID" value="NC_009674.1"/>
</dbReference>
<dbReference type="SMR" id="A7GRM4"/>
<dbReference type="STRING" id="315749.Bcer98_2548"/>
<dbReference type="GeneID" id="33897802"/>
<dbReference type="KEGG" id="bcy:Bcer98_2548"/>
<dbReference type="eggNOG" id="COG1799">
    <property type="taxonomic scope" value="Bacteria"/>
</dbReference>
<dbReference type="HOGENOM" id="CLU_078499_4_1_9"/>
<dbReference type="OrthoDB" id="9815206at2"/>
<dbReference type="Proteomes" id="UP000002300">
    <property type="component" value="Chromosome"/>
</dbReference>
<dbReference type="GO" id="GO:0005737">
    <property type="term" value="C:cytoplasm"/>
    <property type="evidence" value="ECO:0007669"/>
    <property type="project" value="UniProtKB-SubCell"/>
</dbReference>
<dbReference type="GO" id="GO:0000917">
    <property type="term" value="P:division septum assembly"/>
    <property type="evidence" value="ECO:0007669"/>
    <property type="project" value="UniProtKB-KW"/>
</dbReference>
<dbReference type="GO" id="GO:0043093">
    <property type="term" value="P:FtsZ-dependent cytokinesis"/>
    <property type="evidence" value="ECO:0007669"/>
    <property type="project" value="UniProtKB-UniRule"/>
</dbReference>
<dbReference type="Gene3D" id="3.30.110.150">
    <property type="entry name" value="SepF-like protein"/>
    <property type="match status" value="1"/>
</dbReference>
<dbReference type="HAMAP" id="MF_01197">
    <property type="entry name" value="SepF"/>
    <property type="match status" value="1"/>
</dbReference>
<dbReference type="InterPro" id="IPR023052">
    <property type="entry name" value="Cell_div_SepF"/>
</dbReference>
<dbReference type="InterPro" id="IPR007561">
    <property type="entry name" value="Cell_div_SepF/SepF-rel"/>
</dbReference>
<dbReference type="InterPro" id="IPR038594">
    <property type="entry name" value="SepF-like_sf"/>
</dbReference>
<dbReference type="PANTHER" id="PTHR35798">
    <property type="entry name" value="CELL DIVISION PROTEIN SEPF"/>
    <property type="match status" value="1"/>
</dbReference>
<dbReference type="PANTHER" id="PTHR35798:SF1">
    <property type="entry name" value="CELL DIVISION PROTEIN SEPF"/>
    <property type="match status" value="1"/>
</dbReference>
<dbReference type="Pfam" id="PF04472">
    <property type="entry name" value="SepF"/>
    <property type="match status" value="1"/>
</dbReference>
<accession>A7GRM4</accession>
<keyword id="KW-0131">Cell cycle</keyword>
<keyword id="KW-0132">Cell division</keyword>
<keyword id="KW-0963">Cytoplasm</keyword>
<keyword id="KW-0717">Septation</keyword>
<comment type="function">
    <text evidence="1">Cell division protein that is part of the divisome complex and is recruited early to the Z-ring. Probably stimulates Z-ring formation, perhaps through the cross-linking of FtsZ protofilaments. Its function overlaps with FtsA.</text>
</comment>
<comment type="subunit">
    <text evidence="1">Homodimer. Interacts with FtsZ.</text>
</comment>
<comment type="subcellular location">
    <subcellularLocation>
        <location evidence="1">Cytoplasm</location>
    </subcellularLocation>
    <text evidence="1">Localizes to the division site, in a FtsZ-dependent manner.</text>
</comment>
<comment type="similarity">
    <text evidence="1">Belongs to the SepF family.</text>
</comment>
<evidence type="ECO:0000255" key="1">
    <source>
        <dbReference type="HAMAP-Rule" id="MF_01197"/>
    </source>
</evidence>
<gene>
    <name evidence="1" type="primary">sepF</name>
    <name type="ordered locus">Bcer98_2548</name>
</gene>
<sequence>MSWSKVKYFFFDTPEEKEAAQYAYEKEQIEMKKQQEPPEQQDVPFTKVQPKQNVVSIETAKQSSKVVLLEPRTYSEAQGIADHLKGKRAVVINLQRMSTDQAVRIVDFLSGTVYAIGGDIQKLGPKTFMCTPENVDIVGAISELFGEEEETNIKRW</sequence>
<feature type="chain" id="PRO_0000333979" description="Cell division protein SepF">
    <location>
        <begin position="1"/>
        <end position="156"/>
    </location>
</feature>
<name>SEPF_BACCN</name>
<organism>
    <name type="scientific">Bacillus cytotoxicus (strain DSM 22905 / CIP 110041 / 391-98 / NVH 391-98)</name>
    <dbReference type="NCBI Taxonomy" id="315749"/>
    <lineage>
        <taxon>Bacteria</taxon>
        <taxon>Bacillati</taxon>
        <taxon>Bacillota</taxon>
        <taxon>Bacilli</taxon>
        <taxon>Bacillales</taxon>
        <taxon>Bacillaceae</taxon>
        <taxon>Bacillus</taxon>
        <taxon>Bacillus cereus group</taxon>
    </lineage>
</organism>
<reference key="1">
    <citation type="journal article" date="2008" name="Chem. Biol. Interact.">
        <title>Extending the Bacillus cereus group genomics to putative food-borne pathogens of different toxicity.</title>
        <authorList>
            <person name="Lapidus A."/>
            <person name="Goltsman E."/>
            <person name="Auger S."/>
            <person name="Galleron N."/>
            <person name="Segurens B."/>
            <person name="Dossat C."/>
            <person name="Land M.L."/>
            <person name="Broussolle V."/>
            <person name="Brillard J."/>
            <person name="Guinebretiere M.-H."/>
            <person name="Sanchis V."/>
            <person name="Nguen-the C."/>
            <person name="Lereclus D."/>
            <person name="Richardson P."/>
            <person name="Wincker P."/>
            <person name="Weissenbach J."/>
            <person name="Ehrlich S.D."/>
            <person name="Sorokin A."/>
        </authorList>
    </citation>
    <scope>NUCLEOTIDE SEQUENCE [LARGE SCALE GENOMIC DNA]</scope>
    <source>
        <strain>DSM 22905 / CIP 110041 / 391-98 / NVH 391-98</strain>
    </source>
</reference>